<protein>
    <recommendedName>
        <fullName evidence="9">Inositol diphosphatase DSP4</fullName>
        <ecNumber evidence="7">3.6.1.52</ecNumber>
    </recommendedName>
    <alternativeName>
        <fullName evidence="9">Inositol pyrophosphate phosphatase DSP4</fullName>
    </alternativeName>
    <alternativeName>
        <fullName evidence="8">Protein PLANT AND FUNGI ATYPICAL DUAL-SPECIFICITY PHOSPHATASE 4</fullName>
        <shortName evidence="8">AtPFA-DSP4</shortName>
    </alternativeName>
</protein>
<proteinExistence type="evidence at protein level"/>
<keyword id="KW-0378">Hydrolase</keyword>
<keyword id="KW-0611">Plant defense</keyword>
<keyword id="KW-1185">Reference proteome</keyword>
<reference key="1">
    <citation type="submission" date="2009-01" db="EMBL/GenBank/DDBJ databases">
        <title>Arabidopsis thaliana PN18 gene, complete cds.</title>
        <authorList>
            <person name="Xie M."/>
            <person name="Jia W."/>
        </authorList>
    </citation>
    <scope>NUCLEOTIDE SEQUENCE [GENOMIC DNA]</scope>
</reference>
<reference key="2">
    <citation type="journal article" date="1999" name="Nature">
        <title>Sequence and analysis of chromosome 4 of the plant Arabidopsis thaliana.</title>
        <authorList>
            <person name="Mayer K.F.X."/>
            <person name="Schueller C."/>
            <person name="Wambutt R."/>
            <person name="Murphy G."/>
            <person name="Volckaert G."/>
            <person name="Pohl T."/>
            <person name="Duesterhoeft A."/>
            <person name="Stiekema W."/>
            <person name="Entian K.-D."/>
            <person name="Terryn N."/>
            <person name="Harris B."/>
            <person name="Ansorge W."/>
            <person name="Brandt P."/>
            <person name="Grivell L.A."/>
            <person name="Rieger M."/>
            <person name="Weichselgartner M."/>
            <person name="de Simone V."/>
            <person name="Obermaier B."/>
            <person name="Mache R."/>
            <person name="Mueller M."/>
            <person name="Kreis M."/>
            <person name="Delseny M."/>
            <person name="Puigdomenech P."/>
            <person name="Watson M."/>
            <person name="Schmidtheini T."/>
            <person name="Reichert B."/>
            <person name="Portetelle D."/>
            <person name="Perez-Alonso M."/>
            <person name="Boutry M."/>
            <person name="Bancroft I."/>
            <person name="Vos P."/>
            <person name="Hoheisel J."/>
            <person name="Zimmermann W."/>
            <person name="Wedler H."/>
            <person name="Ridley P."/>
            <person name="Langham S.-A."/>
            <person name="McCullagh B."/>
            <person name="Bilham L."/>
            <person name="Robben J."/>
            <person name="van der Schueren J."/>
            <person name="Grymonprez B."/>
            <person name="Chuang Y.-J."/>
            <person name="Vandenbussche F."/>
            <person name="Braeken M."/>
            <person name="Weltjens I."/>
            <person name="Voet M."/>
            <person name="Bastiaens I."/>
            <person name="Aert R."/>
            <person name="Defoor E."/>
            <person name="Weitzenegger T."/>
            <person name="Bothe G."/>
            <person name="Ramsperger U."/>
            <person name="Hilbert H."/>
            <person name="Braun M."/>
            <person name="Holzer E."/>
            <person name="Brandt A."/>
            <person name="Peters S."/>
            <person name="van Staveren M."/>
            <person name="Dirkse W."/>
            <person name="Mooijman P."/>
            <person name="Klein Lankhorst R."/>
            <person name="Rose M."/>
            <person name="Hauf J."/>
            <person name="Koetter P."/>
            <person name="Berneiser S."/>
            <person name="Hempel S."/>
            <person name="Feldpausch M."/>
            <person name="Lamberth S."/>
            <person name="Van den Daele H."/>
            <person name="De Keyser A."/>
            <person name="Buysshaert C."/>
            <person name="Gielen J."/>
            <person name="Villarroel R."/>
            <person name="De Clercq R."/>
            <person name="van Montagu M."/>
            <person name="Rogers J."/>
            <person name="Cronin A."/>
            <person name="Quail M.A."/>
            <person name="Bray-Allen S."/>
            <person name="Clark L."/>
            <person name="Doggett J."/>
            <person name="Hall S."/>
            <person name="Kay M."/>
            <person name="Lennard N."/>
            <person name="McLay K."/>
            <person name="Mayes R."/>
            <person name="Pettett A."/>
            <person name="Rajandream M.A."/>
            <person name="Lyne M."/>
            <person name="Benes V."/>
            <person name="Rechmann S."/>
            <person name="Borkova D."/>
            <person name="Bloecker H."/>
            <person name="Scharfe M."/>
            <person name="Grimm M."/>
            <person name="Loehnert T.-H."/>
            <person name="Dose S."/>
            <person name="de Haan M."/>
            <person name="Maarse A.C."/>
            <person name="Schaefer M."/>
            <person name="Mueller-Auer S."/>
            <person name="Gabel C."/>
            <person name="Fuchs M."/>
            <person name="Fartmann B."/>
            <person name="Granderath K."/>
            <person name="Dauner D."/>
            <person name="Herzl A."/>
            <person name="Neumann S."/>
            <person name="Argiriou A."/>
            <person name="Vitale D."/>
            <person name="Liguori R."/>
            <person name="Piravandi E."/>
            <person name="Massenet O."/>
            <person name="Quigley F."/>
            <person name="Clabauld G."/>
            <person name="Muendlein A."/>
            <person name="Felber R."/>
            <person name="Schnabl S."/>
            <person name="Hiller R."/>
            <person name="Schmidt W."/>
            <person name="Lecharny A."/>
            <person name="Aubourg S."/>
            <person name="Chefdor F."/>
            <person name="Cooke R."/>
            <person name="Berger C."/>
            <person name="Monfort A."/>
            <person name="Casacuberta E."/>
            <person name="Gibbons T."/>
            <person name="Weber N."/>
            <person name="Vandenbol M."/>
            <person name="Bargues M."/>
            <person name="Terol J."/>
            <person name="Torres A."/>
            <person name="Perez-Perez A."/>
            <person name="Purnelle B."/>
            <person name="Bent E."/>
            <person name="Johnson S."/>
            <person name="Tacon D."/>
            <person name="Jesse T."/>
            <person name="Heijnen L."/>
            <person name="Schwarz S."/>
            <person name="Scholler P."/>
            <person name="Heber S."/>
            <person name="Francs P."/>
            <person name="Bielke C."/>
            <person name="Frishman D."/>
            <person name="Haase D."/>
            <person name="Lemcke K."/>
            <person name="Mewes H.-W."/>
            <person name="Stocker S."/>
            <person name="Zaccaria P."/>
            <person name="Bevan M."/>
            <person name="Wilson R.K."/>
            <person name="de la Bastide M."/>
            <person name="Habermann K."/>
            <person name="Parnell L."/>
            <person name="Dedhia N."/>
            <person name="Gnoj L."/>
            <person name="Schutz K."/>
            <person name="Huang E."/>
            <person name="Spiegel L."/>
            <person name="Sekhon M."/>
            <person name="Murray J."/>
            <person name="Sheet P."/>
            <person name="Cordes M."/>
            <person name="Abu-Threideh J."/>
            <person name="Stoneking T."/>
            <person name="Kalicki J."/>
            <person name="Graves T."/>
            <person name="Harmon G."/>
            <person name="Edwards J."/>
            <person name="Latreille P."/>
            <person name="Courtney L."/>
            <person name="Cloud J."/>
            <person name="Abbott A."/>
            <person name="Scott K."/>
            <person name="Johnson D."/>
            <person name="Minx P."/>
            <person name="Bentley D."/>
            <person name="Fulton B."/>
            <person name="Miller N."/>
            <person name="Greco T."/>
            <person name="Kemp K."/>
            <person name="Kramer J."/>
            <person name="Fulton L."/>
            <person name="Mardis E."/>
            <person name="Dante M."/>
            <person name="Pepin K."/>
            <person name="Hillier L.W."/>
            <person name="Nelson J."/>
            <person name="Spieth J."/>
            <person name="Ryan E."/>
            <person name="Andrews S."/>
            <person name="Geisel C."/>
            <person name="Layman D."/>
            <person name="Du H."/>
            <person name="Ali J."/>
            <person name="Berghoff A."/>
            <person name="Jones K."/>
            <person name="Drone K."/>
            <person name="Cotton M."/>
            <person name="Joshu C."/>
            <person name="Antonoiu B."/>
            <person name="Zidanic M."/>
            <person name="Strong C."/>
            <person name="Sun H."/>
            <person name="Lamar B."/>
            <person name="Yordan C."/>
            <person name="Ma P."/>
            <person name="Zhong J."/>
            <person name="Preston R."/>
            <person name="Vil D."/>
            <person name="Shekher M."/>
            <person name="Matero A."/>
            <person name="Shah R."/>
            <person name="Swaby I.K."/>
            <person name="O'Shaughnessy A."/>
            <person name="Rodriguez M."/>
            <person name="Hoffman J."/>
            <person name="Till S."/>
            <person name="Granat S."/>
            <person name="Shohdy N."/>
            <person name="Hasegawa A."/>
            <person name="Hameed A."/>
            <person name="Lodhi M."/>
            <person name="Johnson A."/>
            <person name="Chen E."/>
            <person name="Marra M.A."/>
            <person name="Martienssen R."/>
            <person name="McCombie W.R."/>
        </authorList>
    </citation>
    <scope>NUCLEOTIDE SEQUENCE [LARGE SCALE GENOMIC DNA]</scope>
    <source>
        <strain>cv. Columbia</strain>
    </source>
</reference>
<reference key="3">
    <citation type="journal article" date="2017" name="Plant J.">
        <title>Araport11: a complete reannotation of the Arabidopsis thaliana reference genome.</title>
        <authorList>
            <person name="Cheng C.Y."/>
            <person name="Krishnakumar V."/>
            <person name="Chan A.P."/>
            <person name="Thibaud-Nissen F."/>
            <person name="Schobel S."/>
            <person name="Town C.D."/>
        </authorList>
    </citation>
    <scope>GENOME REANNOTATION</scope>
    <source>
        <strain>cv. Columbia</strain>
    </source>
</reference>
<reference key="4">
    <citation type="journal article" date="2002" name="Science">
        <title>Functional annotation of a full-length Arabidopsis cDNA collection.</title>
        <authorList>
            <person name="Seki M."/>
            <person name="Narusaka M."/>
            <person name="Kamiya A."/>
            <person name="Ishida J."/>
            <person name="Satou M."/>
            <person name="Sakurai T."/>
            <person name="Nakajima M."/>
            <person name="Enju A."/>
            <person name="Akiyama K."/>
            <person name="Oono Y."/>
            <person name="Muramatsu M."/>
            <person name="Hayashizaki Y."/>
            <person name="Kawai J."/>
            <person name="Carninci P."/>
            <person name="Itoh M."/>
            <person name="Ishii Y."/>
            <person name="Arakawa T."/>
            <person name="Shibata K."/>
            <person name="Shinagawa A."/>
            <person name="Shinozaki K."/>
        </authorList>
    </citation>
    <scope>NUCLEOTIDE SEQUENCE [LARGE SCALE MRNA]</scope>
    <source>
        <strain>cv. Columbia</strain>
    </source>
</reference>
<reference key="5">
    <citation type="journal article" date="2003" name="Science">
        <title>Empirical analysis of transcriptional activity in the Arabidopsis genome.</title>
        <authorList>
            <person name="Yamada K."/>
            <person name="Lim J."/>
            <person name="Dale J.M."/>
            <person name="Chen H."/>
            <person name="Shinn P."/>
            <person name="Palm C.J."/>
            <person name="Southwick A.M."/>
            <person name="Wu H.C."/>
            <person name="Kim C.J."/>
            <person name="Nguyen M."/>
            <person name="Pham P.K."/>
            <person name="Cheuk R.F."/>
            <person name="Karlin-Newmann G."/>
            <person name="Liu S.X."/>
            <person name="Lam B."/>
            <person name="Sakano H."/>
            <person name="Wu T."/>
            <person name="Yu G."/>
            <person name="Miranda M."/>
            <person name="Quach H.L."/>
            <person name="Tripp M."/>
            <person name="Chang C.H."/>
            <person name="Lee J.M."/>
            <person name="Toriumi M.J."/>
            <person name="Chan M.M."/>
            <person name="Tang C.C."/>
            <person name="Onodera C.S."/>
            <person name="Deng J.M."/>
            <person name="Akiyama K."/>
            <person name="Ansari Y."/>
            <person name="Arakawa T."/>
            <person name="Banh J."/>
            <person name="Banno F."/>
            <person name="Bowser L."/>
            <person name="Brooks S.Y."/>
            <person name="Carninci P."/>
            <person name="Chao Q."/>
            <person name="Choy N."/>
            <person name="Enju A."/>
            <person name="Goldsmith A.D."/>
            <person name="Gurjal M."/>
            <person name="Hansen N.F."/>
            <person name="Hayashizaki Y."/>
            <person name="Johnson-Hopson C."/>
            <person name="Hsuan V.W."/>
            <person name="Iida K."/>
            <person name="Karnes M."/>
            <person name="Khan S."/>
            <person name="Koesema E."/>
            <person name="Ishida J."/>
            <person name="Jiang P.X."/>
            <person name="Jones T."/>
            <person name="Kawai J."/>
            <person name="Kamiya A."/>
            <person name="Meyers C."/>
            <person name="Nakajima M."/>
            <person name="Narusaka M."/>
            <person name="Seki M."/>
            <person name="Sakurai T."/>
            <person name="Satou M."/>
            <person name="Tamse R."/>
            <person name="Vaysberg M."/>
            <person name="Wallender E.K."/>
            <person name="Wong C."/>
            <person name="Yamamura Y."/>
            <person name="Yuan S."/>
            <person name="Shinozaki K."/>
            <person name="Davis R.W."/>
            <person name="Theologis A."/>
            <person name="Ecker J.R."/>
        </authorList>
    </citation>
    <scope>NUCLEOTIDE SEQUENCE [LARGE SCALE MRNA]</scope>
    <source>
        <strain>cv. Columbia</strain>
    </source>
</reference>
<reference key="6">
    <citation type="submission" date="2002-03" db="EMBL/GenBank/DDBJ databases">
        <title>Full-length cDNA from Arabidopsis thaliana.</title>
        <authorList>
            <person name="Brover V.V."/>
            <person name="Troukhan M.E."/>
            <person name="Alexandrov N.A."/>
            <person name="Lu Y.-P."/>
            <person name="Flavell R.B."/>
            <person name="Feldmann K.A."/>
        </authorList>
    </citation>
    <scope>NUCLEOTIDE SEQUENCE [LARGE SCALE MRNA]</scope>
</reference>
<reference key="7">
    <citation type="journal article" date="2011" name="Mol. Genet. Genomics">
        <title>Phylogenetic and genetic linkage between novel atypical dual-specificity phosphatases from non-metazoan organisms.</title>
        <authorList>
            <person name="Roma-Mateo C."/>
            <person name="Sacristan-Reviriego A."/>
            <person name="Beresford N.J."/>
            <person name="Caparros-Martin J.A."/>
            <person name="Culianez-Macia F.A."/>
            <person name="Martin H."/>
            <person name="Molina M."/>
            <person name="Tabernero L."/>
            <person name="Pulido R."/>
        </authorList>
    </citation>
    <scope>TISSUE SPECIFICITY</scope>
</reference>
<reference key="8">
    <citation type="journal article" date="2012" name="PLoS ONE">
        <title>Two homologous putative protein tyrosine phosphatases, OsPFA-DSP2 and AtPFA-DSP4, negatively regulate the pathogen response in transgenic plants.</title>
        <authorList>
            <person name="He H."/>
            <person name="Su J."/>
            <person name="Shu S."/>
            <person name="Zhang Y."/>
            <person name="Ao Y."/>
            <person name="Liu B."/>
            <person name="Feng D."/>
            <person name="Wang J."/>
            <person name="Wang H."/>
        </authorList>
    </citation>
    <scope>FUNCTION</scope>
</reference>
<reference key="9">
    <citation type="journal article" date="2022" name="Biochemistry">
        <title>Arabidopsis PFA-DSP-Type Phosphohydrolases Target Specific Inositol Pyrophosphate Messengers.</title>
        <authorList>
            <person name="Gaugler P."/>
            <person name="Schneider R."/>
            <person name="Liu G."/>
            <person name="Qiu D."/>
            <person name="Weber J."/>
            <person name="Schmid J."/>
            <person name="Jork N."/>
            <person name="Haener M."/>
            <person name="Ritter K."/>
            <person name="Fernandez-Rebollo N."/>
            <person name="Giehl R.F.H."/>
            <person name="Trung M.N."/>
            <person name="Yadav R."/>
            <person name="Fiedler D."/>
            <person name="Gaugler V."/>
            <person name="Jessen H.J."/>
            <person name="Schaaf G."/>
            <person name="Laha D."/>
        </authorList>
    </citation>
    <scope>FUNCTION</scope>
    <scope>CATALYTIC ACTIVITY</scope>
</reference>
<comment type="function">
    <text evidence="6 7">Cleaves the beta-phosphate at the 5-position of soluble inositol pyrophosphates (PubMed:35640071). Has highest activity on 5-diphosphoinositol 1,2,3,4,6-pentakisphosphate (5-InsP(7)), 1,5-bis-diphosphoinositol 2,3,4,6-tetrakisphosphate (1,5-InsP(8)) and 3,5-InsP(8) (PubMed:35640071). Acts as a negative regulator of defense responses against the bacterial pathogen Pseudomonas syringae pv tomato strain DC3000 (PubMed:22514699).</text>
</comment>
<comment type="catalytic activity">
    <reaction evidence="7">
        <text>5-diphospho-1D-myo-inositol 1,2,3,4,6-pentakisphosphate + H2O = 1D-myo-inositol hexakisphosphate + phosphate + H(+)</text>
        <dbReference type="Rhea" id="RHEA:22384"/>
        <dbReference type="ChEBI" id="CHEBI:15377"/>
        <dbReference type="ChEBI" id="CHEBI:15378"/>
        <dbReference type="ChEBI" id="CHEBI:43474"/>
        <dbReference type="ChEBI" id="CHEBI:58130"/>
        <dbReference type="ChEBI" id="CHEBI:58628"/>
        <dbReference type="EC" id="3.6.1.52"/>
    </reaction>
    <physiologicalReaction direction="left-to-right" evidence="7">
        <dbReference type="Rhea" id="RHEA:22385"/>
    </physiologicalReaction>
</comment>
<comment type="catalytic activity">
    <reaction evidence="7">
        <text>1,5-bis(diphospho)-1D-myo-inositol 2,3,4,6-tetrakisphosphate + H2O = 1-diphospho-1D-myo-inositol 2,3,4,5,6-pentakisphosphate + phosphate + 2 H(+)</text>
        <dbReference type="Rhea" id="RHEA:79699"/>
        <dbReference type="ChEBI" id="CHEBI:15377"/>
        <dbReference type="ChEBI" id="CHEBI:15378"/>
        <dbReference type="ChEBI" id="CHEBI:43474"/>
        <dbReference type="ChEBI" id="CHEBI:74946"/>
        <dbReference type="ChEBI" id="CHEBI:77983"/>
        <dbReference type="EC" id="3.6.1.52"/>
    </reaction>
    <physiologicalReaction direction="left-to-right" evidence="7">
        <dbReference type="Rhea" id="RHEA:79700"/>
    </physiologicalReaction>
</comment>
<comment type="catalytic activity">
    <reaction evidence="7">
        <text>3,5-bis(diphospho)-1D-myo-inositol 1,2,4,6-tetrakisphosphate + H2O = 3-diphospho-1D-myo-inositol 1,2,4,5,6-pentakisphosphate + phosphate + 2 H(+)</text>
        <dbReference type="Rhea" id="RHEA:56312"/>
        <dbReference type="ChEBI" id="CHEBI:15377"/>
        <dbReference type="ChEBI" id="CHEBI:15378"/>
        <dbReference type="ChEBI" id="CHEBI:43474"/>
        <dbReference type="ChEBI" id="CHEBI:140372"/>
        <dbReference type="ChEBI" id="CHEBI:140374"/>
        <dbReference type="EC" id="3.6.1.52"/>
    </reaction>
    <physiologicalReaction direction="left-to-right" evidence="7">
        <dbReference type="Rhea" id="RHEA:56313"/>
    </physiologicalReaction>
</comment>
<comment type="catalytic activity">
    <reaction evidence="7">
        <text>6-diphospho-1D-myo-inositol pentakisphosphate + H2O = 1D-myo-inositol hexakisphosphate + phosphate + H(+)</text>
        <dbReference type="Rhea" id="RHEA:79703"/>
        <dbReference type="ChEBI" id="CHEBI:15377"/>
        <dbReference type="ChEBI" id="CHEBI:15378"/>
        <dbReference type="ChEBI" id="CHEBI:43474"/>
        <dbReference type="ChEBI" id="CHEBI:58130"/>
        <dbReference type="ChEBI" id="CHEBI:230534"/>
        <dbReference type="EC" id="3.6.1.52"/>
    </reaction>
    <physiologicalReaction direction="left-to-right" evidence="7">
        <dbReference type="Rhea" id="RHEA:79704"/>
    </physiologicalReaction>
</comment>
<comment type="tissue specificity">
    <text evidence="5">Highly expressed in flowers and at lower levels in roots, leaves, stems and siliques.</text>
</comment>
<comment type="miscellaneous">
    <text evidence="6">Plants overexpressing DSP4 exhibit increased sensitivity to infection by the bacterial pathogen Pseudomonas syringae pv tomato strain DC3000.</text>
</comment>
<comment type="similarity">
    <text evidence="9">Belongs to the protein-tyrosine phosphatase family. Atypical dual-specificity phosphatase Siw14-like subfamily.</text>
</comment>
<comment type="caution">
    <text evidence="9">Was initially described as a protein tyrosine phosphatase and has phosphotyrosine phosphatase activity in vitro but is now thought to function as an inositol pyrophosphate phosphatase.</text>
</comment>
<comment type="sequence caution" evidence="9">
    <conflict type="erroneous gene model prediction">
        <sequence resource="EMBL-CDS" id="AAC28219"/>
    </conflict>
</comment>
<comment type="sequence caution" evidence="9">
    <conflict type="erroneous gene model prediction">
        <sequence resource="EMBL-CDS" id="CAB80819"/>
    </conflict>
</comment>
<organism>
    <name type="scientific">Arabidopsis thaliana</name>
    <name type="common">Mouse-ear cress</name>
    <dbReference type="NCBI Taxonomy" id="3702"/>
    <lineage>
        <taxon>Eukaryota</taxon>
        <taxon>Viridiplantae</taxon>
        <taxon>Streptophyta</taxon>
        <taxon>Embryophyta</taxon>
        <taxon>Tracheophyta</taxon>
        <taxon>Spermatophyta</taxon>
        <taxon>Magnoliopsida</taxon>
        <taxon>eudicotyledons</taxon>
        <taxon>Gunneridae</taxon>
        <taxon>Pentapetalae</taxon>
        <taxon>rosids</taxon>
        <taxon>malvids</taxon>
        <taxon>Brassicales</taxon>
        <taxon>Brassicaceae</taxon>
        <taxon>Camelineae</taxon>
        <taxon>Arabidopsis</taxon>
    </lineage>
</organism>
<accession>Q940L5</accession>
<accession>O81513</accession>
<gene>
    <name evidence="9" type="primary">DSP4</name>
    <name evidence="12" type="synonym">PN18</name>
    <name evidence="10" type="ordered locus">At4g03960</name>
    <name evidence="11" type="ORF">T24M8.4</name>
</gene>
<feature type="chain" id="PRO_0000442994" description="Inositol diphosphatase DSP4">
    <location>
        <begin position="1"/>
        <end position="198"/>
    </location>
</feature>
<feature type="domain" description="Tyrosine-protein phosphatase" evidence="3">
    <location>
        <begin position="34"/>
        <end position="188"/>
    </location>
</feature>
<feature type="region of interest" description="Disordered" evidence="4">
    <location>
        <begin position="1"/>
        <end position="23"/>
    </location>
</feature>
<feature type="region of interest" description="WPD loop important for active site topology" evidence="2">
    <location>
        <begin position="90"/>
        <end position="102"/>
    </location>
</feature>
<feature type="active site" description="Phosphocysteine intermediate" evidence="3">
    <location>
        <position position="126"/>
    </location>
</feature>
<feature type="binding site" evidence="2">
    <location>
        <position position="101"/>
    </location>
    <ligand>
        <name>1D-myo-inositol hexakisphosphate</name>
        <dbReference type="ChEBI" id="CHEBI:58130"/>
    </ligand>
</feature>
<feature type="binding site" evidence="2">
    <location>
        <position position="102"/>
    </location>
    <ligand>
        <name>1D-myo-inositol hexakisphosphate</name>
        <dbReference type="ChEBI" id="CHEBI:58130"/>
    </ligand>
</feature>
<feature type="site" description="Transition state stabilizer" evidence="1">
    <location>
        <position position="132"/>
    </location>
</feature>
<evidence type="ECO:0000250" key="1">
    <source>
        <dbReference type="UniProtKB" id="P53965"/>
    </source>
</evidence>
<evidence type="ECO:0000250" key="2">
    <source>
        <dbReference type="UniProtKB" id="Q9ZVN4"/>
    </source>
</evidence>
<evidence type="ECO:0000255" key="3">
    <source>
        <dbReference type="PROSITE-ProRule" id="PRU00160"/>
    </source>
</evidence>
<evidence type="ECO:0000256" key="4">
    <source>
        <dbReference type="SAM" id="MobiDB-lite"/>
    </source>
</evidence>
<evidence type="ECO:0000269" key="5">
    <source>
    </source>
</evidence>
<evidence type="ECO:0000269" key="6">
    <source>
    </source>
</evidence>
<evidence type="ECO:0000269" key="7">
    <source>
    </source>
</evidence>
<evidence type="ECO:0000303" key="8">
    <source>
    </source>
</evidence>
<evidence type="ECO:0000305" key="9"/>
<evidence type="ECO:0000312" key="10">
    <source>
        <dbReference type="Araport" id="AT4G03960"/>
    </source>
</evidence>
<evidence type="ECO:0000312" key="11">
    <source>
        <dbReference type="EMBL" id="AAC28219.1"/>
    </source>
</evidence>
<evidence type="ECO:0000312" key="12">
    <source>
        <dbReference type="EMBL" id="ACU43462.1"/>
    </source>
</evidence>
<sequence>MTLESYAGDVHTVPQSENSMEERGGGELFVPPLNFAMVDNGIFRSGFPEPVSFSFLQSLRLKSIIYLCPEAYPEVNREFAKSNGIQVFQFGIERCKEPFVNIPDEVIREALQVLLDTENHPVLIHCKSGKHRTGCLVGCVRKIQRWCLSSIFDEYQRFAAAKARISDQRFMELFDISNLKHTPLSFSCSKRYTNTIDY</sequence>
<name>DSP4_ARATH</name>
<dbReference type="EC" id="3.6.1.52" evidence="7"/>
<dbReference type="EMBL" id="FJ605098">
    <property type="protein sequence ID" value="ACU43462.1"/>
    <property type="molecule type" value="Genomic_DNA"/>
</dbReference>
<dbReference type="EMBL" id="AF077409">
    <property type="protein sequence ID" value="AAC28219.1"/>
    <property type="status" value="ALT_SEQ"/>
    <property type="molecule type" value="Genomic_DNA"/>
</dbReference>
<dbReference type="EMBL" id="AL161498">
    <property type="protein sequence ID" value="CAB80819.1"/>
    <property type="status" value="ALT_SEQ"/>
    <property type="molecule type" value="Genomic_DNA"/>
</dbReference>
<dbReference type="EMBL" id="CP002687">
    <property type="protein sequence ID" value="AEE82361.1"/>
    <property type="molecule type" value="Genomic_DNA"/>
</dbReference>
<dbReference type="EMBL" id="AK118704">
    <property type="protein sequence ID" value="BAC43298.1"/>
    <property type="molecule type" value="mRNA"/>
</dbReference>
<dbReference type="EMBL" id="AF458342">
    <property type="protein sequence ID" value="AAL51114.1"/>
    <property type="molecule type" value="mRNA"/>
</dbReference>
<dbReference type="EMBL" id="AY054279">
    <property type="protein sequence ID" value="AAL06938.1"/>
    <property type="molecule type" value="mRNA"/>
</dbReference>
<dbReference type="EMBL" id="AY086713">
    <property type="protein sequence ID" value="AAM63767.1"/>
    <property type="molecule type" value="mRNA"/>
</dbReference>
<dbReference type="PIR" id="T01867">
    <property type="entry name" value="T01867"/>
</dbReference>
<dbReference type="SMR" id="Q940L5"/>
<dbReference type="FunCoup" id="Q940L5">
    <property type="interactions" value="44"/>
</dbReference>
<dbReference type="STRING" id="3702.Q940L5"/>
<dbReference type="PaxDb" id="3702-AT4G03960.1"/>
<dbReference type="ProteomicsDB" id="251350"/>
<dbReference type="EnsemblPlants" id="AT4G03960.1">
    <property type="protein sequence ID" value="AT4G03960.1"/>
    <property type="gene ID" value="AT4G03960"/>
</dbReference>
<dbReference type="GeneID" id="825706"/>
<dbReference type="Gramene" id="AT4G03960.1">
    <property type="protein sequence ID" value="AT4G03960.1"/>
    <property type="gene ID" value="AT4G03960"/>
</dbReference>
<dbReference type="KEGG" id="ath:AT4G03960"/>
<dbReference type="Araport" id="AT4G03960"/>
<dbReference type="TAIR" id="AT4G03960">
    <property type="gene designation" value="PFA-DSP4"/>
</dbReference>
<dbReference type="eggNOG" id="KOG1572">
    <property type="taxonomic scope" value="Eukaryota"/>
</dbReference>
<dbReference type="HOGENOM" id="CLU_047845_5_0_1"/>
<dbReference type="InParanoid" id="Q940L5"/>
<dbReference type="OMA" id="GMATWKP"/>
<dbReference type="PhylomeDB" id="Q940L5"/>
<dbReference type="PRO" id="PR:Q940L5"/>
<dbReference type="Proteomes" id="UP000006548">
    <property type="component" value="Chromosome 4"/>
</dbReference>
<dbReference type="ExpressionAtlas" id="Q940L5">
    <property type="expression patterns" value="baseline and differential"/>
</dbReference>
<dbReference type="GO" id="GO:0052847">
    <property type="term" value="F:inositol-1,5-bisdiphosphate-2,3,4,6-tetrakisphosphate 5-diphosphatase activity"/>
    <property type="evidence" value="ECO:0000314"/>
    <property type="project" value="UniProtKB"/>
</dbReference>
<dbReference type="GO" id="GO:0052848">
    <property type="term" value="F:inositol-3,5-bisdiphosphate-2,3,4,6-tetrakisphosphate 5-diphosphatase activity"/>
    <property type="evidence" value="ECO:0007669"/>
    <property type="project" value="RHEA"/>
</dbReference>
<dbReference type="GO" id="GO:0052845">
    <property type="term" value="F:inositol-5-diphosphate-1,2,3,4,6-pentakisphosphate diphosphatase activity"/>
    <property type="evidence" value="ECO:0000314"/>
    <property type="project" value="UniProtKB"/>
</dbReference>
<dbReference type="GO" id="GO:0004725">
    <property type="term" value="F:protein tyrosine phosphatase activity"/>
    <property type="evidence" value="ECO:0007669"/>
    <property type="project" value="UniProtKB-EC"/>
</dbReference>
<dbReference type="GO" id="GO:0006952">
    <property type="term" value="P:defense response"/>
    <property type="evidence" value="ECO:0007669"/>
    <property type="project" value="UniProtKB-KW"/>
</dbReference>
<dbReference type="GO" id="GO:1900424">
    <property type="term" value="P:regulation of defense response to bacterium"/>
    <property type="evidence" value="ECO:0000315"/>
    <property type="project" value="TAIR"/>
</dbReference>
<dbReference type="CDD" id="cd14528">
    <property type="entry name" value="PFA-DSP_Siw14"/>
    <property type="match status" value="1"/>
</dbReference>
<dbReference type="FunFam" id="3.90.190.10:FF:000024">
    <property type="entry name" value="probable tyrosine-protein phosphatase At1g05000"/>
    <property type="match status" value="1"/>
</dbReference>
<dbReference type="Gene3D" id="3.90.190.10">
    <property type="entry name" value="Protein tyrosine phosphatase superfamily"/>
    <property type="match status" value="1"/>
</dbReference>
<dbReference type="InterPro" id="IPR020428">
    <property type="entry name" value="PFA-DSPs"/>
</dbReference>
<dbReference type="InterPro" id="IPR029021">
    <property type="entry name" value="Prot-tyrosine_phosphatase-like"/>
</dbReference>
<dbReference type="InterPro" id="IPR004861">
    <property type="entry name" value="Siw14-like"/>
</dbReference>
<dbReference type="InterPro" id="IPR016130">
    <property type="entry name" value="Tyr_Pase_AS"/>
</dbReference>
<dbReference type="InterPro" id="IPR000387">
    <property type="entry name" value="Tyr_Pase_dom"/>
</dbReference>
<dbReference type="InterPro" id="IPR020422">
    <property type="entry name" value="TYR_PHOSPHATASE_DUAL_dom"/>
</dbReference>
<dbReference type="PANTHER" id="PTHR31126">
    <property type="entry name" value="TYROSINE-PROTEIN PHOSPHATASE"/>
    <property type="match status" value="1"/>
</dbReference>
<dbReference type="PANTHER" id="PTHR31126:SF51">
    <property type="entry name" value="TYROSINE-PROTEIN PHOSPHATASE DSP4-RELATED"/>
    <property type="match status" value="1"/>
</dbReference>
<dbReference type="Pfam" id="PF03162">
    <property type="entry name" value="Y_phosphatase2"/>
    <property type="match status" value="1"/>
</dbReference>
<dbReference type="PRINTS" id="PR01911">
    <property type="entry name" value="PFDSPHPHTASE"/>
</dbReference>
<dbReference type="SUPFAM" id="SSF52799">
    <property type="entry name" value="(Phosphotyrosine protein) phosphatases II"/>
    <property type="match status" value="1"/>
</dbReference>
<dbReference type="PROSITE" id="PS00383">
    <property type="entry name" value="TYR_PHOSPHATASE_1"/>
    <property type="match status" value="1"/>
</dbReference>
<dbReference type="PROSITE" id="PS50056">
    <property type="entry name" value="TYR_PHOSPHATASE_2"/>
    <property type="match status" value="1"/>
</dbReference>
<dbReference type="PROSITE" id="PS50054">
    <property type="entry name" value="TYR_PHOSPHATASE_DUAL"/>
    <property type="match status" value="1"/>
</dbReference>